<dbReference type="EC" id="3.5.1.1"/>
<dbReference type="EMBL" id="J03926">
    <property type="protein sequence ID" value="AAA34438.1"/>
    <property type="status" value="ALT_FRAME"/>
    <property type="molecule type" value="Genomic_DNA"/>
</dbReference>
<dbReference type="EMBL" id="U51921">
    <property type="protein sequence ID" value="AAB67479.1"/>
    <property type="molecule type" value="Genomic_DNA"/>
</dbReference>
<dbReference type="EMBL" id="AY557957">
    <property type="protein sequence ID" value="AAS56283.1"/>
    <property type="molecule type" value="Genomic_DNA"/>
</dbReference>
<dbReference type="EMBL" id="BK006945">
    <property type="protein sequence ID" value="DAA09469.1"/>
    <property type="molecule type" value="Genomic_DNA"/>
</dbReference>
<dbReference type="PIR" id="S68471">
    <property type="entry name" value="S68471"/>
</dbReference>
<dbReference type="RefSeq" id="NP_013256.1">
    <property type="nucleotide sequence ID" value="NM_001182042.1"/>
</dbReference>
<dbReference type="SMR" id="P0CZ17"/>
<dbReference type="BioGRID" id="31426">
    <property type="interactions" value="3"/>
</dbReference>
<dbReference type="BioGRID" id="31428">
    <property type="interactions" value="39"/>
</dbReference>
<dbReference type="BioGRID" id="31431">
    <property type="interactions" value="61"/>
</dbReference>
<dbReference type="BioGRID" id="31433">
    <property type="interactions" value="31"/>
</dbReference>
<dbReference type="FunCoup" id="P0CZ17">
    <property type="interactions" value="83"/>
</dbReference>
<dbReference type="STRING" id="4932.YLR155C"/>
<dbReference type="GlyCosmos" id="P0CZ17">
    <property type="glycosylation" value="3 sites, No reported glycans"/>
</dbReference>
<dbReference type="GlyGen" id="P0CZ17">
    <property type="glycosylation" value="3 sites"/>
</dbReference>
<dbReference type="PaxDb" id="4932-YLR155C"/>
<dbReference type="EnsemblFungi" id="YLR155C_mRNA">
    <property type="protein sequence ID" value="YLR155C"/>
    <property type="gene ID" value="YLR155C"/>
</dbReference>
<dbReference type="EnsemblFungi" id="YLR157C_mRNA">
    <property type="protein sequence ID" value="YLR157C"/>
    <property type="gene ID" value="YLR157C"/>
</dbReference>
<dbReference type="EnsemblFungi" id="YLR158C_mRNA">
    <property type="protein sequence ID" value="YLR158C"/>
    <property type="gene ID" value="YLR158C"/>
</dbReference>
<dbReference type="EnsemblFungi" id="YLR160C_mRNA">
    <property type="protein sequence ID" value="YLR160C"/>
    <property type="gene ID" value="YLR160C"/>
</dbReference>
<dbReference type="GeneID" id="850850"/>
<dbReference type="KEGG" id="sce:YLR155C"/>
<dbReference type="KEGG" id="sce:YLR157C"/>
<dbReference type="KEGG" id="sce:YLR158C"/>
<dbReference type="KEGG" id="sce:YLR160C"/>
<dbReference type="AGR" id="SGD:S000004145"/>
<dbReference type="SGD" id="S000004145">
    <property type="gene designation" value="ASP3-1"/>
</dbReference>
<dbReference type="VEuPathDB" id="FungiDB:YLR155C"/>
<dbReference type="VEuPathDB" id="FungiDB:YLR157C"/>
<dbReference type="VEuPathDB" id="FungiDB:YLR158C"/>
<dbReference type="VEuPathDB" id="FungiDB:YLR160C"/>
<dbReference type="eggNOG" id="KOG0503">
    <property type="taxonomic scope" value="Eukaryota"/>
</dbReference>
<dbReference type="GeneTree" id="ENSGT00940000176327"/>
<dbReference type="HOGENOM" id="CLU_019134_1_1_1"/>
<dbReference type="InParanoid" id="P0CZ17"/>
<dbReference type="OMA" id="TKTYGFH"/>
<dbReference type="OrthoDB" id="542841at2759"/>
<dbReference type="BioCyc" id="YEAST:YLR155C-MONOMER"/>
<dbReference type="BRENDA" id="3.5.1.1">
    <property type="organism ID" value="984"/>
</dbReference>
<dbReference type="SABIO-RK" id="P0CZ17"/>
<dbReference type="PRO" id="PR:P0CZ17"/>
<dbReference type="Proteomes" id="UP000002311">
    <property type="component" value="Chromosome XII"/>
</dbReference>
<dbReference type="RNAct" id="P0CZ17">
    <property type="molecule type" value="protein"/>
</dbReference>
<dbReference type="ExpressionAtlas" id="P0CZ17">
    <property type="expression patterns" value="baseline"/>
</dbReference>
<dbReference type="GO" id="GO:0030287">
    <property type="term" value="C:cell wall-bounded periplasmic space"/>
    <property type="evidence" value="ECO:0000314"/>
    <property type="project" value="SGD"/>
</dbReference>
<dbReference type="GO" id="GO:0005783">
    <property type="term" value="C:endoplasmic reticulum"/>
    <property type="evidence" value="ECO:0007005"/>
    <property type="project" value="SGD"/>
</dbReference>
<dbReference type="GO" id="GO:0005576">
    <property type="term" value="C:extracellular region"/>
    <property type="evidence" value="ECO:0007669"/>
    <property type="project" value="UniProtKB-SubCell"/>
</dbReference>
<dbReference type="GO" id="GO:0005635">
    <property type="term" value="C:nuclear envelope"/>
    <property type="evidence" value="ECO:0007005"/>
    <property type="project" value="SGD"/>
</dbReference>
<dbReference type="GO" id="GO:0042597">
    <property type="term" value="C:periplasmic space"/>
    <property type="evidence" value="ECO:0000318"/>
    <property type="project" value="GO_Central"/>
</dbReference>
<dbReference type="GO" id="GO:0004067">
    <property type="term" value="F:asparaginase activity"/>
    <property type="evidence" value="ECO:0000314"/>
    <property type="project" value="SGD"/>
</dbReference>
<dbReference type="GO" id="GO:0006530">
    <property type="term" value="P:asparagine catabolic process"/>
    <property type="evidence" value="ECO:0000314"/>
    <property type="project" value="SGD"/>
</dbReference>
<dbReference type="GO" id="GO:0006995">
    <property type="term" value="P:cellular response to nitrogen starvation"/>
    <property type="evidence" value="ECO:0000314"/>
    <property type="project" value="SGD"/>
</dbReference>
<dbReference type="CDD" id="cd08964">
    <property type="entry name" value="L-asparaginase_II"/>
    <property type="match status" value="1"/>
</dbReference>
<dbReference type="FunFam" id="3.40.50.1170:FF:000001">
    <property type="entry name" value="L-asparaginase 2"/>
    <property type="match status" value="1"/>
</dbReference>
<dbReference type="FunFam" id="3.40.50.40:FF:000006">
    <property type="entry name" value="L-asparaginase I"/>
    <property type="match status" value="1"/>
</dbReference>
<dbReference type="Gene3D" id="3.40.50.40">
    <property type="match status" value="1"/>
</dbReference>
<dbReference type="Gene3D" id="3.40.50.1170">
    <property type="entry name" value="L-asparaginase, N-terminal domain"/>
    <property type="match status" value="1"/>
</dbReference>
<dbReference type="InterPro" id="IPR004550">
    <property type="entry name" value="AsnASE_II"/>
</dbReference>
<dbReference type="InterPro" id="IPR036152">
    <property type="entry name" value="Asp/glu_Ase-like_sf"/>
</dbReference>
<dbReference type="InterPro" id="IPR006034">
    <property type="entry name" value="Asparaginase/glutaminase-like"/>
</dbReference>
<dbReference type="InterPro" id="IPR020827">
    <property type="entry name" value="Asparaginase/glutaminase_AS1"/>
</dbReference>
<dbReference type="InterPro" id="IPR027475">
    <property type="entry name" value="Asparaginase/glutaminase_AS2"/>
</dbReference>
<dbReference type="InterPro" id="IPR040919">
    <property type="entry name" value="Asparaginase_C"/>
</dbReference>
<dbReference type="InterPro" id="IPR027473">
    <property type="entry name" value="L-asparaginase_C"/>
</dbReference>
<dbReference type="InterPro" id="IPR027474">
    <property type="entry name" value="L-asparaginase_N"/>
</dbReference>
<dbReference type="InterPro" id="IPR037152">
    <property type="entry name" value="L-asparaginase_N_sf"/>
</dbReference>
<dbReference type="NCBIfam" id="TIGR00520">
    <property type="entry name" value="asnASE_II"/>
    <property type="match status" value="1"/>
</dbReference>
<dbReference type="PANTHER" id="PTHR11707:SF28">
    <property type="entry name" value="60 KDA LYSOPHOSPHOLIPASE"/>
    <property type="match status" value="1"/>
</dbReference>
<dbReference type="PANTHER" id="PTHR11707">
    <property type="entry name" value="L-ASPARAGINASE"/>
    <property type="match status" value="1"/>
</dbReference>
<dbReference type="Pfam" id="PF00710">
    <property type="entry name" value="Asparaginase"/>
    <property type="match status" value="1"/>
</dbReference>
<dbReference type="Pfam" id="PF17763">
    <property type="entry name" value="Asparaginase_C"/>
    <property type="match status" value="1"/>
</dbReference>
<dbReference type="PIRSF" id="PIRSF001220">
    <property type="entry name" value="L-ASNase_gatD"/>
    <property type="match status" value="1"/>
</dbReference>
<dbReference type="PIRSF" id="PIRSF500176">
    <property type="entry name" value="L_ASNase"/>
    <property type="match status" value="1"/>
</dbReference>
<dbReference type="PRINTS" id="PR00139">
    <property type="entry name" value="ASNGLNASE"/>
</dbReference>
<dbReference type="SMART" id="SM00870">
    <property type="entry name" value="Asparaginase"/>
    <property type="match status" value="1"/>
</dbReference>
<dbReference type="SUPFAM" id="SSF53774">
    <property type="entry name" value="Glutaminase/Asparaginase"/>
    <property type="match status" value="1"/>
</dbReference>
<dbReference type="PROSITE" id="PS00144">
    <property type="entry name" value="ASN_GLN_ASE_1"/>
    <property type="match status" value="1"/>
</dbReference>
<dbReference type="PROSITE" id="PS00917">
    <property type="entry name" value="ASN_GLN_ASE_2"/>
    <property type="match status" value="1"/>
</dbReference>
<dbReference type="PROSITE" id="PS51732">
    <property type="entry name" value="ASN_GLN_ASE_3"/>
    <property type="match status" value="1"/>
</dbReference>
<keyword id="KW-0903">Direct protein sequencing</keyword>
<keyword id="KW-0325">Glycoprotein</keyword>
<keyword id="KW-0378">Hydrolase</keyword>
<keyword id="KW-0574">Periplasm</keyword>
<keyword id="KW-1185">Reference proteome</keyword>
<keyword id="KW-0964">Secreted</keyword>
<keyword id="KW-0732">Signal</keyword>
<feature type="signal peptide" evidence="6">
    <location>
        <begin position="1"/>
        <end position="25"/>
    </location>
</feature>
<feature type="chain" id="PRO_0000002362" description="L-asparaginase 2-1">
    <location>
        <begin position="26"/>
        <end position="362"/>
    </location>
</feature>
<feature type="domain" description="Asparaginase/glutaminase" evidence="3">
    <location>
        <begin position="33"/>
        <end position="359"/>
    </location>
</feature>
<feature type="active site" description="O-isoaspartyl threonine intermediate" evidence="4 5">
    <location>
        <position position="43"/>
    </location>
</feature>
<feature type="binding site" evidence="1">
    <location>
        <position position="89"/>
    </location>
    <ligand>
        <name>substrate</name>
    </ligand>
</feature>
<feature type="binding site" evidence="1">
    <location>
        <begin position="122"/>
        <end position="123"/>
    </location>
    <ligand>
        <name>substrate</name>
    </ligand>
</feature>
<feature type="glycosylation site" description="N-linked (GlcNAc...) asparagine" evidence="2">
    <location>
        <position position="29"/>
    </location>
</feature>
<feature type="glycosylation site" description="N-linked (GlcNAc...) asparagine" evidence="2">
    <location>
        <position position="93"/>
    </location>
</feature>
<feature type="glycosylation site" description="N-linked (GlcNAc...) asparagine" evidence="2">
    <location>
        <position position="239"/>
    </location>
</feature>
<feature type="sequence variant" evidence="6">
    <location>
        <begin position="26"/>
        <end position="55"/>
    </location>
</feature>
<feature type="sequence conflict" description="In Ref. 4; AAS56283." evidence="10" ref="4">
    <original>S</original>
    <variation>P</variation>
    <location>
        <position position="31"/>
    </location>
</feature>
<proteinExistence type="evidence at protein level"/>
<evidence type="ECO:0000250" key="1"/>
<evidence type="ECO:0000255" key="2"/>
<evidence type="ECO:0000255" key="3">
    <source>
        <dbReference type="PROSITE-ProRule" id="PRU01068"/>
    </source>
</evidence>
<evidence type="ECO:0000255" key="4">
    <source>
        <dbReference type="PROSITE-ProRule" id="PRU10099"/>
    </source>
</evidence>
<evidence type="ECO:0000255" key="5">
    <source>
        <dbReference type="PROSITE-ProRule" id="PRU10100"/>
    </source>
</evidence>
<evidence type="ECO:0000269" key="6">
    <source>
    </source>
</evidence>
<evidence type="ECO:0000269" key="7">
    <source>
    </source>
</evidence>
<evidence type="ECO:0000269" key="8">
    <source>
    </source>
</evidence>
<evidence type="ECO:0000269" key="9">
    <source>
    </source>
</evidence>
<evidence type="ECO:0000305" key="10"/>
<organism>
    <name type="scientific">Saccharomyces cerevisiae (strain ATCC 204508 / S288c)</name>
    <name type="common">Baker's yeast</name>
    <dbReference type="NCBI Taxonomy" id="559292"/>
    <lineage>
        <taxon>Eukaryota</taxon>
        <taxon>Fungi</taxon>
        <taxon>Dikarya</taxon>
        <taxon>Ascomycota</taxon>
        <taxon>Saccharomycotina</taxon>
        <taxon>Saccharomycetes</taxon>
        <taxon>Saccharomycetales</taxon>
        <taxon>Saccharomycetaceae</taxon>
        <taxon>Saccharomyces</taxon>
    </lineage>
</organism>
<reference key="1">
    <citation type="journal article" date="1988" name="J. Biol. Chem.">
        <title>Asparaginase II of Saccharomyces cerevisiae. Characterization of the ASP3 gene.</title>
        <authorList>
            <person name="Kim K.-W."/>
            <person name="Kamerud J.Q."/>
            <person name="Livingston D.M."/>
            <person name="Roon R.J."/>
        </authorList>
    </citation>
    <scope>NUCLEOTIDE SEQUENCE [GENOMIC DNA]</scope>
    <scope>PROTEIN SEQUENCE OF 26-41 AND 56-71</scope>
    <scope>VARIANT 26-GLU--ALA-55 DEL</scope>
</reference>
<reference key="2">
    <citation type="journal article" date="1997" name="Nature">
        <title>The nucleotide sequence of Saccharomyces cerevisiae chromosome XII.</title>
        <authorList>
            <person name="Johnston M."/>
            <person name="Hillier L.W."/>
            <person name="Riles L."/>
            <person name="Albermann K."/>
            <person name="Andre B."/>
            <person name="Ansorge W."/>
            <person name="Benes V."/>
            <person name="Brueckner M."/>
            <person name="Delius H."/>
            <person name="Dubois E."/>
            <person name="Duesterhoeft A."/>
            <person name="Entian K.-D."/>
            <person name="Floeth M."/>
            <person name="Goffeau A."/>
            <person name="Hebling U."/>
            <person name="Heumann K."/>
            <person name="Heuss-Neitzel D."/>
            <person name="Hilbert H."/>
            <person name="Hilger F."/>
            <person name="Kleine K."/>
            <person name="Koetter P."/>
            <person name="Louis E.J."/>
            <person name="Messenguy F."/>
            <person name="Mewes H.-W."/>
            <person name="Miosga T."/>
            <person name="Moestl D."/>
            <person name="Mueller-Auer S."/>
            <person name="Nentwich U."/>
            <person name="Obermaier B."/>
            <person name="Piravandi E."/>
            <person name="Pohl T.M."/>
            <person name="Portetelle D."/>
            <person name="Purnelle B."/>
            <person name="Rechmann S."/>
            <person name="Rieger M."/>
            <person name="Rinke M."/>
            <person name="Rose M."/>
            <person name="Scharfe M."/>
            <person name="Scherens B."/>
            <person name="Scholler P."/>
            <person name="Schwager C."/>
            <person name="Schwarz S."/>
            <person name="Underwood A.P."/>
            <person name="Urrestarazu L.A."/>
            <person name="Vandenbol M."/>
            <person name="Verhasselt P."/>
            <person name="Vierendeels F."/>
            <person name="Voet M."/>
            <person name="Volckaert G."/>
            <person name="Voss H."/>
            <person name="Wambutt R."/>
            <person name="Wedler E."/>
            <person name="Wedler H."/>
            <person name="Zimmermann F.K."/>
            <person name="Zollner A."/>
            <person name="Hani J."/>
            <person name="Hoheisel J.D."/>
        </authorList>
    </citation>
    <scope>NUCLEOTIDE SEQUENCE [LARGE SCALE GENOMIC DNA]</scope>
    <source>
        <strain>ATCC 204508 / S288c</strain>
    </source>
</reference>
<reference key="3">
    <citation type="journal article" date="2014" name="G3 (Bethesda)">
        <title>The reference genome sequence of Saccharomyces cerevisiae: Then and now.</title>
        <authorList>
            <person name="Engel S.R."/>
            <person name="Dietrich F.S."/>
            <person name="Fisk D.G."/>
            <person name="Binkley G."/>
            <person name="Balakrishnan R."/>
            <person name="Costanzo M.C."/>
            <person name="Dwight S.S."/>
            <person name="Hitz B.C."/>
            <person name="Karra K."/>
            <person name="Nash R.S."/>
            <person name="Weng S."/>
            <person name="Wong E.D."/>
            <person name="Lloyd P."/>
            <person name="Skrzypek M.S."/>
            <person name="Miyasato S.R."/>
            <person name="Simison M."/>
            <person name="Cherry J.M."/>
        </authorList>
    </citation>
    <scope>GENOME REANNOTATION</scope>
    <source>
        <strain>ATCC 204508 / S288c</strain>
    </source>
</reference>
<reference key="4">
    <citation type="journal article" date="2007" name="Genome Res.">
        <title>Approaching a complete repository of sequence-verified protein-encoding clones for Saccharomyces cerevisiae.</title>
        <authorList>
            <person name="Hu Y."/>
            <person name="Rolfs A."/>
            <person name="Bhullar B."/>
            <person name="Murthy T.V.S."/>
            <person name="Zhu C."/>
            <person name="Berger M.F."/>
            <person name="Camargo A.A."/>
            <person name="Kelley F."/>
            <person name="McCarron S."/>
            <person name="Jepson D."/>
            <person name="Richardson A."/>
            <person name="Raphael J."/>
            <person name="Moreira D."/>
            <person name="Taycher E."/>
            <person name="Zuo D."/>
            <person name="Mohr S."/>
            <person name="Kane M.F."/>
            <person name="Williamson J."/>
            <person name="Simpson A.J.G."/>
            <person name="Bulyk M.L."/>
            <person name="Harlow E."/>
            <person name="Marsischky G."/>
            <person name="Kolodner R.D."/>
            <person name="LaBaer J."/>
        </authorList>
    </citation>
    <scope>NUCLEOTIDE SEQUENCE [GENOMIC DNA]</scope>
    <source>
        <strain>ATCC 204508 / S288c</strain>
    </source>
</reference>
<reference key="5">
    <citation type="journal article" date="1978" name="J. Biol. Chem.">
        <title>Characterization of two forms of asparaginase in Saccharomyces cerevisiae.</title>
        <authorList>
            <person name="Dunlop P.C."/>
            <person name="Meyer G.M."/>
            <person name="Ban D."/>
            <person name="Roon R.J."/>
        </authorList>
    </citation>
    <scope>BIOPHYSICOCHEMICAL PROPERTIES</scope>
</reference>
<reference key="6">
    <citation type="journal article" date="1980" name="J. Bacteriol.">
        <title>Nitrogen catabolite repression of asparaginase II in Saccharomyces cerevisiae.</title>
        <authorList>
            <person name="Dunlop P.C."/>
            <person name="Meyer G.M."/>
            <person name="Roon R.J."/>
        </authorList>
    </citation>
    <scope>INDUCTION</scope>
</reference>
<reference key="7">
    <citation type="journal article" date="1980" name="J. Biol. Chem.">
        <title>Reactions of asparaginase II of Saccharomyces cerevisiae. A mechanistic analysis of hydrolysis and hydroxylaminolysis.</title>
        <authorList>
            <person name="Dunlop P.C."/>
            <person name="Meyer G.M."/>
            <person name="Roon R.J."/>
        </authorList>
    </citation>
    <scope>BIOPHYSICOCHEMICAL PROPERTIES</scope>
</reference>
<protein>
    <recommendedName>
        <fullName>L-asparaginase 2-1</fullName>
        <ecNumber>3.5.1.1</ecNumber>
    </recommendedName>
    <alternativeName>
        <fullName>L-asparaginase II</fullName>
    </alternativeName>
    <alternativeName>
        <fullName>L-asparagine amidohydrolase II</fullName>
        <shortName>ASP II</shortName>
    </alternativeName>
</protein>
<accession>P0CZ17</accession>
<accession>D6VYF3</accession>
<accession>P11163</accession>
<accession>Q12268</accession>
<accession>Q6Q5K8</accession>
<accession>Q6Q5K9</accession>
<sequence length="362" mass="38687">MRSLNTLLLSLFVAMSSGAPLLKIREEKNSSLPSIKIFGTGGTIASKGSTSATTAGYSVGLTVNDLIEAVPSLAEKANLDYLQVSNVGSNSLNYTHLIPLYHGISEALASDDYAGAVVTHGTDTMEETAFFLDLTINSEKPVCIAGAMRPATATSADGPMNLYQAVSIAASEKSLGRGTMITLNDRIASGFWTTKMNANSLDTFRADEQGYLGYFSNDDVEFYYPPVKPNGWQFFDISNLTDPSEIPEVIILYSYQGLNPELIVKAVKDLGAKGIVLAGSGAGSWTATGSIVNEQLYEEYGIPIVHSRRTADGTVPPDDAPEYAIGSGYLNPQKSRILLQLCLYSGYGMDQIRSVFSGVYGG</sequence>
<gene>
    <name type="primary">ASP3-1</name>
    <name type="ordered locus">YLR155C</name>
    <name type="ORF">L9632.6</name>
</gene>
<name>ASP21_YEAST</name>
<comment type="catalytic activity">
    <reaction>
        <text>L-asparagine + H2O = L-aspartate + NH4(+)</text>
        <dbReference type="Rhea" id="RHEA:21016"/>
        <dbReference type="ChEBI" id="CHEBI:15377"/>
        <dbReference type="ChEBI" id="CHEBI:28938"/>
        <dbReference type="ChEBI" id="CHEBI:29991"/>
        <dbReference type="ChEBI" id="CHEBI:58048"/>
        <dbReference type="EC" id="3.5.1.1"/>
    </reaction>
</comment>
<comment type="biophysicochemical properties">
    <kinetics>
        <KM evidence="7 8">0.27 mM for L-asparagine</KM>
        <KM evidence="7 8">0.27 mM for D-asparagine</KM>
        <KM evidence="7 8">0.27 mM for N-acetyl-L-asparagine</KM>
        <KM evidence="7 8">0.07 mM for N-carbamyl-L-asparagine</KM>
        <KM evidence="7 8">0.06 mM for N-isoleucyl-L-asparagine</KM>
        <KM evidence="7 8">0.06 mM for N-glycyl-L-asparagine</KM>
        <KM evidence="7 8">0.06 mM for N-valyl-L-asparagine</KM>
        <KM evidence="7 8">0.2 mM for N-methionyl-L-asparagine</KM>
        <KM evidence="7 8">0.4 mM for N-glycyl-D-asparagine</KM>
        <Vmax evidence="7 8">42.0 umol/min/mg enzyme for L-asparagine</Vmax>
        <Vmax evidence="7 8">60.0 umol/min/mg enzyme for D-asparagine</Vmax>
        <Vmax evidence="7 8">167.0 umol/min/mg enzyme for N-acetyl-L-asparagine</Vmax>
        <Vmax evidence="7 8">79.0 umol/min/mg enzyme for N-carbamyl-L-asparagine</Vmax>
        <Vmax evidence="7 8">67.0 umol/min/mg enzyme for N-isoleucyl-L-asparagine</Vmax>
        <Vmax evidence="7 8">135.0 umol/min/mg enzyme for N-glycyl-L-asparagine</Vmax>
        <Vmax evidence="7 8">56.0 umol/min/mg enzyme for N-valyl-L-asparagine</Vmax>
        <Vmax evidence="7 8">92.0 umol/min/mg enzyme for N-methionyl-L-asparagine</Vmax>
        <Vmax evidence="7 8">8.0 umol/min/mg enzyme for N-glycyl-D-asparagine</Vmax>
        <text>Does not act on isoasparagine, L-aspartate diamide, beta-alanine amide and L-glutamine.</text>
    </kinetics>
    <phDependence>
        <text evidence="7 8">Optimum pH is 6.8. Active from pH 5.5 to pH 7.5. Stable from pH 3.5 to pH 10.5.</text>
    </phDependence>
</comment>
<comment type="subcellular location">
    <subcellularLocation>
        <location>Secreted</location>
    </subcellularLocation>
    <subcellularLocation>
        <location>Periplasm</location>
    </subcellularLocation>
</comment>
<comment type="induction">
    <text evidence="9">Subject to nitrogen catabolite repression (NCR). Not found in cells grown on rich nitrogen sources like ammonia, glutamine or glutamate, but is found in cells that have been subjected to nitrogen starvation or have been grown on a poor nitrogen source such as proline.</text>
</comment>
<comment type="miscellaneous">
    <text>Yeast contains 2 L-asparaginase isoenzymes: cytoplasmic L-asparaginase I, and cell wall L-asparaginase II.</text>
</comment>
<comment type="miscellaneous">
    <text>There are 4 copies for L-asparaginase 2 in yeast. The 4 identical copies ASP3-1, ASP3-2, ASP3-3 and ASP3-4 are arranged in tandem repeats located near a ribosomal DNA cluster.</text>
</comment>
<comment type="similarity">
    <text evidence="10">Belongs to the asparaginase 1 family.</text>
</comment>
<comment type="sequence caution" evidence="10">
    <conflict type="frameshift">
        <sequence resource="EMBL-CDS" id="AAA34438"/>
    </conflict>
</comment>